<sequence length="205" mass="22321">MAAARPSLGRVLPGSSILFLCDMQEKFRHNIAYFPQIVSVAARMLRVARLLEVPVMLTEQYPQGLGPTVPELGAEGLRPLAKTCFSMVPALRQELDSRPQLRSVLLCGIEAQACILNTTLDLLDQGLQVHVVVDACSSRSQVDRLVALARMRQSGAFLSTSEGLILQLVGDAAHPQFKEIQKLIKEPAPDSGLLGLFQGQNSLLH</sequence>
<comment type="subunit">
    <text evidence="1">Interacts with CDKN2A.</text>
</comment>
<comment type="subcellular location">
    <subcellularLocation>
        <location evidence="1">Cytoplasm</location>
    </subcellularLocation>
    <subcellularLocation>
        <location evidence="1">Nucleus</location>
    </subcellularLocation>
    <text evidence="1">Localizes to the nucleus in the presence of CDKN2A.</text>
</comment>
<comment type="similarity">
    <text evidence="3">Belongs to the isochorismatase family.</text>
</comment>
<protein>
    <recommendedName>
        <fullName>Isochorismatase domain-containing protein 2</fullName>
    </recommendedName>
</protein>
<evidence type="ECO:0000250" key="1"/>
<evidence type="ECO:0000250" key="2">
    <source>
        <dbReference type="UniProtKB" id="Q96AB3"/>
    </source>
</evidence>
<evidence type="ECO:0000305" key="3"/>
<keyword id="KW-0963">Cytoplasm</keyword>
<keyword id="KW-0539">Nucleus</keyword>
<keyword id="KW-0597">Phosphoprotein</keyword>
<keyword id="KW-1185">Reference proteome</keyword>
<proteinExistence type="evidence at transcript level"/>
<gene>
    <name type="primary">ISOC2</name>
</gene>
<feature type="chain" id="PRO_0000268674" description="Isochorismatase domain-containing protein 2">
    <location>
        <begin position="1"/>
        <end position="205"/>
    </location>
</feature>
<feature type="modified residue" description="Phosphoserine" evidence="2">
    <location>
        <position position="7"/>
    </location>
</feature>
<feature type="modified residue" description="Phosphoserine" evidence="2">
    <location>
        <position position="202"/>
    </location>
</feature>
<name>ISOC2_PONAB</name>
<dbReference type="EMBL" id="CR858479">
    <property type="protein sequence ID" value="CAH90707.1"/>
    <property type="molecule type" value="mRNA"/>
</dbReference>
<dbReference type="RefSeq" id="NP_001127324.1">
    <property type="nucleotide sequence ID" value="NM_001133852.2"/>
</dbReference>
<dbReference type="SMR" id="Q5RC03"/>
<dbReference type="FunCoup" id="Q5RC03">
    <property type="interactions" value="1422"/>
</dbReference>
<dbReference type="STRING" id="9601.ENSPPYP00000011680"/>
<dbReference type="GeneID" id="100174385"/>
<dbReference type="KEGG" id="pon:100174385"/>
<dbReference type="CTD" id="79763"/>
<dbReference type="eggNOG" id="KOG4044">
    <property type="taxonomic scope" value="Eukaryota"/>
</dbReference>
<dbReference type="InParanoid" id="Q5RC03"/>
<dbReference type="OrthoDB" id="269496at2759"/>
<dbReference type="Proteomes" id="UP000001595">
    <property type="component" value="Unplaced"/>
</dbReference>
<dbReference type="GO" id="GO:0005737">
    <property type="term" value="C:cytoplasm"/>
    <property type="evidence" value="ECO:0007669"/>
    <property type="project" value="UniProtKB-SubCell"/>
</dbReference>
<dbReference type="GO" id="GO:0005634">
    <property type="term" value="C:nucleus"/>
    <property type="evidence" value="ECO:0007669"/>
    <property type="project" value="UniProtKB-SubCell"/>
</dbReference>
<dbReference type="CDD" id="cd01012">
    <property type="entry name" value="YcaC_related"/>
    <property type="match status" value="1"/>
</dbReference>
<dbReference type="FunFam" id="3.40.50.850:FF:000001">
    <property type="entry name" value="Isochorismatase domain-containing protein 1"/>
    <property type="match status" value="1"/>
</dbReference>
<dbReference type="Gene3D" id="3.40.50.850">
    <property type="entry name" value="Isochorismatase-like"/>
    <property type="match status" value="1"/>
</dbReference>
<dbReference type="InterPro" id="IPR000868">
    <property type="entry name" value="Isochorismatase-like_dom"/>
</dbReference>
<dbReference type="InterPro" id="IPR036380">
    <property type="entry name" value="Isochorismatase-like_sf"/>
</dbReference>
<dbReference type="InterPro" id="IPR050993">
    <property type="entry name" value="Isochorismatase_domain"/>
</dbReference>
<dbReference type="PANTHER" id="PTHR14119">
    <property type="entry name" value="HYDROLASE"/>
    <property type="match status" value="1"/>
</dbReference>
<dbReference type="PANTHER" id="PTHR14119:SF3">
    <property type="entry name" value="ISOCHORISMATASE DOMAIN-CONTAINING PROTEIN 2"/>
    <property type="match status" value="1"/>
</dbReference>
<dbReference type="Pfam" id="PF00857">
    <property type="entry name" value="Isochorismatase"/>
    <property type="match status" value="1"/>
</dbReference>
<dbReference type="SUPFAM" id="SSF52499">
    <property type="entry name" value="Isochorismatase-like hydrolases"/>
    <property type="match status" value="1"/>
</dbReference>
<accession>Q5RC03</accession>
<reference key="1">
    <citation type="submission" date="2004-11" db="EMBL/GenBank/DDBJ databases">
        <authorList>
            <consortium name="The German cDNA consortium"/>
        </authorList>
    </citation>
    <scope>NUCLEOTIDE SEQUENCE [LARGE SCALE MRNA]</scope>
    <source>
        <tissue>Heart</tissue>
    </source>
</reference>
<organism>
    <name type="scientific">Pongo abelii</name>
    <name type="common">Sumatran orangutan</name>
    <name type="synonym">Pongo pygmaeus abelii</name>
    <dbReference type="NCBI Taxonomy" id="9601"/>
    <lineage>
        <taxon>Eukaryota</taxon>
        <taxon>Metazoa</taxon>
        <taxon>Chordata</taxon>
        <taxon>Craniata</taxon>
        <taxon>Vertebrata</taxon>
        <taxon>Euteleostomi</taxon>
        <taxon>Mammalia</taxon>
        <taxon>Eutheria</taxon>
        <taxon>Euarchontoglires</taxon>
        <taxon>Primates</taxon>
        <taxon>Haplorrhini</taxon>
        <taxon>Catarrhini</taxon>
        <taxon>Hominidae</taxon>
        <taxon>Pongo</taxon>
    </lineage>
</organism>